<keyword id="KW-1185">Reference proteome</keyword>
<keyword id="KW-0687">Ribonucleoprotein</keyword>
<keyword id="KW-0689">Ribosomal protein</keyword>
<keyword id="KW-0694">RNA-binding</keyword>
<keyword id="KW-0699">rRNA-binding</keyword>
<keyword id="KW-0820">tRNA-binding</keyword>
<protein>
    <recommendedName>
        <fullName evidence="1">Small ribosomal subunit protein uS7</fullName>
    </recommendedName>
    <alternativeName>
        <fullName evidence="2">30S ribosomal protein S7</fullName>
    </alternativeName>
</protein>
<feature type="chain" id="PRO_0000124294" description="Small ribosomal subunit protein uS7">
    <location>
        <begin position="1"/>
        <end position="155"/>
    </location>
</feature>
<proteinExistence type="inferred from homology"/>
<name>RS7_MYCGA</name>
<dbReference type="EMBL" id="AE015450">
    <property type="protein sequence ID" value="AAP56883.1"/>
    <property type="molecule type" value="Genomic_DNA"/>
</dbReference>
<dbReference type="RefSeq" id="WP_011113787.1">
    <property type="nucleotide sequence ID" value="NC_004829.2"/>
</dbReference>
<dbReference type="SMR" id="Q7NAV2"/>
<dbReference type="GeneID" id="93510367"/>
<dbReference type="KEGG" id="mga:MGA_0261"/>
<dbReference type="HOGENOM" id="CLU_072226_1_1_14"/>
<dbReference type="OrthoDB" id="9807653at2"/>
<dbReference type="Proteomes" id="UP000001418">
    <property type="component" value="Chromosome"/>
</dbReference>
<dbReference type="GO" id="GO:0015935">
    <property type="term" value="C:small ribosomal subunit"/>
    <property type="evidence" value="ECO:0007669"/>
    <property type="project" value="InterPro"/>
</dbReference>
<dbReference type="GO" id="GO:0019843">
    <property type="term" value="F:rRNA binding"/>
    <property type="evidence" value="ECO:0007669"/>
    <property type="project" value="UniProtKB-UniRule"/>
</dbReference>
<dbReference type="GO" id="GO:0003735">
    <property type="term" value="F:structural constituent of ribosome"/>
    <property type="evidence" value="ECO:0007669"/>
    <property type="project" value="InterPro"/>
</dbReference>
<dbReference type="GO" id="GO:0000049">
    <property type="term" value="F:tRNA binding"/>
    <property type="evidence" value="ECO:0007669"/>
    <property type="project" value="UniProtKB-UniRule"/>
</dbReference>
<dbReference type="GO" id="GO:0006412">
    <property type="term" value="P:translation"/>
    <property type="evidence" value="ECO:0007669"/>
    <property type="project" value="UniProtKB-UniRule"/>
</dbReference>
<dbReference type="CDD" id="cd14869">
    <property type="entry name" value="uS7_Bacteria"/>
    <property type="match status" value="1"/>
</dbReference>
<dbReference type="FunFam" id="1.10.455.10:FF:000001">
    <property type="entry name" value="30S ribosomal protein S7"/>
    <property type="match status" value="1"/>
</dbReference>
<dbReference type="Gene3D" id="1.10.455.10">
    <property type="entry name" value="Ribosomal protein S7 domain"/>
    <property type="match status" value="1"/>
</dbReference>
<dbReference type="HAMAP" id="MF_00480_B">
    <property type="entry name" value="Ribosomal_uS7_B"/>
    <property type="match status" value="1"/>
</dbReference>
<dbReference type="InterPro" id="IPR000235">
    <property type="entry name" value="Ribosomal_uS7"/>
</dbReference>
<dbReference type="InterPro" id="IPR005717">
    <property type="entry name" value="Ribosomal_uS7_bac/org-type"/>
</dbReference>
<dbReference type="InterPro" id="IPR020606">
    <property type="entry name" value="Ribosomal_uS7_CS"/>
</dbReference>
<dbReference type="InterPro" id="IPR023798">
    <property type="entry name" value="Ribosomal_uS7_dom"/>
</dbReference>
<dbReference type="InterPro" id="IPR036823">
    <property type="entry name" value="Ribosomal_uS7_dom_sf"/>
</dbReference>
<dbReference type="NCBIfam" id="TIGR01029">
    <property type="entry name" value="rpsG_bact"/>
    <property type="match status" value="1"/>
</dbReference>
<dbReference type="PANTHER" id="PTHR11205">
    <property type="entry name" value="RIBOSOMAL PROTEIN S7"/>
    <property type="match status" value="1"/>
</dbReference>
<dbReference type="Pfam" id="PF00177">
    <property type="entry name" value="Ribosomal_S7"/>
    <property type="match status" value="1"/>
</dbReference>
<dbReference type="PIRSF" id="PIRSF002122">
    <property type="entry name" value="RPS7p_RPS7a_RPS5e_RPS7o"/>
    <property type="match status" value="1"/>
</dbReference>
<dbReference type="SUPFAM" id="SSF47973">
    <property type="entry name" value="Ribosomal protein S7"/>
    <property type="match status" value="1"/>
</dbReference>
<dbReference type="PROSITE" id="PS00052">
    <property type="entry name" value="RIBOSOMAL_S7"/>
    <property type="match status" value="1"/>
</dbReference>
<gene>
    <name evidence="1" type="primary">rpsG</name>
    <name type="ordered locus">MYCGA5330</name>
    <name type="ORF">MGA_0261</name>
</gene>
<comment type="function">
    <text evidence="1">One of the primary rRNA binding proteins, it binds directly to 16S rRNA where it nucleates assembly of the head domain of the 30S subunit. Is located at the subunit interface close to the decoding center, probably blocks exit of the E-site tRNA.</text>
</comment>
<comment type="subunit">
    <text evidence="1">Part of the 30S ribosomal subunit. Contacts proteins S9 and S11.</text>
</comment>
<comment type="similarity">
    <text evidence="1">Belongs to the universal ribosomal protein uS7 family.</text>
</comment>
<reference key="1">
    <citation type="journal article" date="2003" name="Microbiology">
        <title>The complete genome sequence of the avian pathogen Mycoplasma gallisepticum strain R(low).</title>
        <authorList>
            <person name="Papazisi L."/>
            <person name="Gorton T.S."/>
            <person name="Kutish G."/>
            <person name="Markham P.F."/>
            <person name="Browning G.F."/>
            <person name="Nguyen D.K."/>
            <person name="Swartzell S."/>
            <person name="Madan A."/>
            <person name="Mahairas G."/>
            <person name="Geary S.J."/>
        </authorList>
    </citation>
    <scope>NUCLEOTIDE SEQUENCE [LARGE SCALE GENOMIC DNA]</scope>
    <source>
        <strain>R(low / passage 15 / clone 2)</strain>
    </source>
</reference>
<evidence type="ECO:0000255" key="1">
    <source>
        <dbReference type="HAMAP-Rule" id="MF_00480"/>
    </source>
</evidence>
<evidence type="ECO:0000305" key="2"/>
<sequence length="155" mass="17682">MRKNRAEKRKVLPDPVYNSVLVTRAINAIMLDGKKGIAQKILYGSFDLIAQKTQKDPLEIFNKAVENIMPRLELKVRRIAGANYQVPTDVSPERKVTLALRWLVTLSRKRHEKTMLDKIANEIIDASNNTGASVKKREDTHKMAEANKAFAHMRM</sequence>
<organism>
    <name type="scientific">Mycoplasmoides gallisepticum (strain R(low / passage 15 / clone 2))</name>
    <name type="common">Mycoplasma gallisepticum</name>
    <dbReference type="NCBI Taxonomy" id="710127"/>
    <lineage>
        <taxon>Bacteria</taxon>
        <taxon>Bacillati</taxon>
        <taxon>Mycoplasmatota</taxon>
        <taxon>Mycoplasmoidales</taxon>
        <taxon>Mycoplasmoidaceae</taxon>
        <taxon>Mycoplasmoides</taxon>
    </lineage>
</organism>
<accession>Q7NAV2</accession>